<name>SMA3_CAEEL</name>
<evidence type="ECO:0000250" key="1"/>
<evidence type="ECO:0000255" key="2">
    <source>
        <dbReference type="PROSITE-ProRule" id="PRU00438"/>
    </source>
</evidence>
<evidence type="ECO:0000255" key="3">
    <source>
        <dbReference type="PROSITE-ProRule" id="PRU00439"/>
    </source>
</evidence>
<evidence type="ECO:0000256" key="4">
    <source>
        <dbReference type="SAM" id="MobiDB-lite"/>
    </source>
</evidence>
<evidence type="ECO:0000269" key="5">
    <source>
    </source>
</evidence>
<evidence type="ECO:0000303" key="6">
    <source>
    </source>
</evidence>
<evidence type="ECO:0000305" key="7"/>
<evidence type="ECO:0000312" key="8">
    <source>
        <dbReference type="WormBase" id="R13F6.9"/>
    </source>
</evidence>
<feature type="chain" id="PRO_0000090880" description="Dwarfin sma-3">
    <location>
        <begin position="1"/>
        <end position="393"/>
    </location>
</feature>
<feature type="domain" description="MH1" evidence="2">
    <location>
        <begin position="10"/>
        <end position="139"/>
    </location>
</feature>
<feature type="domain" description="MH2" evidence="3">
    <location>
        <begin position="197"/>
        <end position="393"/>
    </location>
</feature>
<feature type="region of interest" description="Disordered" evidence="4">
    <location>
        <begin position="136"/>
        <end position="190"/>
    </location>
</feature>
<feature type="compositionally biased region" description="Low complexity" evidence="4">
    <location>
        <begin position="141"/>
        <end position="176"/>
    </location>
</feature>
<feature type="binding site" evidence="1">
    <location>
        <position position="65"/>
    </location>
    <ligand>
        <name>Zn(2+)</name>
        <dbReference type="ChEBI" id="CHEBI:29105"/>
    </ligand>
</feature>
<feature type="binding site" evidence="1">
    <location>
        <position position="110"/>
    </location>
    <ligand>
        <name>Zn(2+)</name>
        <dbReference type="ChEBI" id="CHEBI:29105"/>
    </ligand>
</feature>
<feature type="binding site" evidence="1">
    <location>
        <position position="124"/>
    </location>
    <ligand>
        <name>Zn(2+)</name>
        <dbReference type="ChEBI" id="CHEBI:29105"/>
    </ligand>
</feature>
<feature type="binding site" evidence="1">
    <location>
        <position position="129"/>
    </location>
    <ligand>
        <name>Zn(2+)</name>
        <dbReference type="ChEBI" id="CHEBI:29105"/>
    </ligand>
</feature>
<feature type="mutagenesis site" description="In e491; low-penetrant disruption (57%) of tail tip morphogenesis resulting in retention of the pointed larval tail tip in adult males (also known as the Lep phenotype). This phenotype is enhanced by RNAi against sma-2." evidence="5">
    <original>G</original>
    <variation>R</variation>
    <location>
        <position position="348"/>
    </location>
</feature>
<protein>
    <recommendedName>
        <fullName>Dwarfin sma-3</fullName>
    </recommendedName>
    <alternativeName>
        <fullName>MAD protein homolog 2</fullName>
    </alternativeName>
</protein>
<accession>P45896</accession>
<proteinExistence type="evidence at protein level"/>
<sequence>MNGLLHMHGPAVKKLLGWKIGEDEEKWCEKAVEALVKKLKKKNNGCGTLEDLECVLANPCTNSRCITIAKSLDGRLQVSHKKGLPHVIYCRVWRWPDISSPHELRSIDTCSYPYESSSKTMYICINPYHYQRLSRPQGLNSSMPSPQPISSPNTIWQSSGSSTASCASSPSPSVFSEDGGEVQVHQRPPPFRHPKSWAQITYFELNSRVGEVFKLVNLSITVDGYTNPSNSNTRICLGQLTNVNRNGTIENTRMHIGKGIQLDNKEDQMHIMITNNSDMPVFVQSKNTNLMMNMPLVKVCRIPPHSQLCVFEFNLFFQMLEQSCNDSDGLNELSKHCFIRISFVKGWGEDYPRQDVTSTPCWLELRLNVPLAYIDQKMKQTPRTNLMEPNSMT</sequence>
<dbReference type="EMBL" id="U34902">
    <property type="protein sequence ID" value="AAA97607.1"/>
    <property type="molecule type" value="mRNA"/>
</dbReference>
<dbReference type="EMBL" id="BX284603">
    <property type="protein sequence ID" value="CCD70180.1"/>
    <property type="molecule type" value="Genomic_DNA"/>
</dbReference>
<dbReference type="PIR" id="T16750">
    <property type="entry name" value="T16750"/>
</dbReference>
<dbReference type="RefSeq" id="NP_498493.1">
    <property type="nucleotide sequence ID" value="NM_066092.5"/>
</dbReference>
<dbReference type="SMR" id="P45896"/>
<dbReference type="BioGRID" id="41170">
    <property type="interactions" value="18"/>
</dbReference>
<dbReference type="FunCoup" id="P45896">
    <property type="interactions" value="458"/>
</dbReference>
<dbReference type="IntAct" id="P45896">
    <property type="interactions" value="9"/>
</dbReference>
<dbReference type="STRING" id="6239.R13F6.9.1"/>
<dbReference type="PaxDb" id="6239-R13F6.9"/>
<dbReference type="PeptideAtlas" id="P45896"/>
<dbReference type="EnsemblMetazoa" id="R13F6.9.1">
    <property type="protein sequence ID" value="R13F6.9.1"/>
    <property type="gene ID" value="WBGene00004857"/>
</dbReference>
<dbReference type="GeneID" id="175955"/>
<dbReference type="KEGG" id="cel:CELE_R13F6.9"/>
<dbReference type="UCSC" id="R13F6.9">
    <property type="organism name" value="c. elegans"/>
</dbReference>
<dbReference type="AGR" id="WB:WBGene00004857"/>
<dbReference type="CTD" id="175955"/>
<dbReference type="WormBase" id="R13F6.9">
    <property type="protein sequence ID" value="CE25974"/>
    <property type="gene ID" value="WBGene00004857"/>
    <property type="gene designation" value="sma-3"/>
</dbReference>
<dbReference type="eggNOG" id="KOG3701">
    <property type="taxonomic scope" value="Eukaryota"/>
</dbReference>
<dbReference type="HOGENOM" id="CLU_026736_0_2_1"/>
<dbReference type="InParanoid" id="P45896"/>
<dbReference type="OMA" id="CRIPPGH"/>
<dbReference type="OrthoDB" id="5794312at2759"/>
<dbReference type="PhylomeDB" id="P45896"/>
<dbReference type="Reactome" id="R-CEL-201451">
    <property type="pathway name" value="Signaling by BMP"/>
</dbReference>
<dbReference type="Reactome" id="R-CEL-5689880">
    <property type="pathway name" value="Ub-specific processing proteases"/>
</dbReference>
<dbReference type="Reactome" id="R-CEL-8941326">
    <property type="pathway name" value="RUNX2 regulates bone development"/>
</dbReference>
<dbReference type="SignaLink" id="P45896"/>
<dbReference type="PRO" id="PR:P45896"/>
<dbReference type="Proteomes" id="UP000001940">
    <property type="component" value="Chromosome III"/>
</dbReference>
<dbReference type="Bgee" id="WBGene00004857">
    <property type="expression patterns" value="Expressed in larva and 3 other cell types or tissues"/>
</dbReference>
<dbReference type="GO" id="GO:0005737">
    <property type="term" value="C:cytoplasm"/>
    <property type="evidence" value="ECO:0000314"/>
    <property type="project" value="WormBase"/>
</dbReference>
<dbReference type="GO" id="GO:0071144">
    <property type="term" value="C:heteromeric SMAD protein complex"/>
    <property type="evidence" value="ECO:0000318"/>
    <property type="project" value="GO_Central"/>
</dbReference>
<dbReference type="GO" id="GO:0005634">
    <property type="term" value="C:nucleus"/>
    <property type="evidence" value="ECO:0000314"/>
    <property type="project" value="WormBase"/>
</dbReference>
<dbReference type="GO" id="GO:0000981">
    <property type="term" value="F:DNA-binding transcription factor activity, RNA polymerase II-specific"/>
    <property type="evidence" value="ECO:0000318"/>
    <property type="project" value="GO_Central"/>
</dbReference>
<dbReference type="GO" id="GO:0070411">
    <property type="term" value="F:I-SMAD binding"/>
    <property type="evidence" value="ECO:0000318"/>
    <property type="project" value="GO_Central"/>
</dbReference>
<dbReference type="GO" id="GO:0046872">
    <property type="term" value="F:metal ion binding"/>
    <property type="evidence" value="ECO:0007669"/>
    <property type="project" value="UniProtKB-KW"/>
</dbReference>
<dbReference type="GO" id="GO:0000978">
    <property type="term" value="F:RNA polymerase II cis-regulatory region sequence-specific DNA binding"/>
    <property type="evidence" value="ECO:0000318"/>
    <property type="project" value="GO_Central"/>
</dbReference>
<dbReference type="GO" id="GO:0003713">
    <property type="term" value="F:transcription coactivator activity"/>
    <property type="evidence" value="ECO:0000314"/>
    <property type="project" value="WormBase"/>
</dbReference>
<dbReference type="GO" id="GO:0009653">
    <property type="term" value="P:anatomical structure morphogenesis"/>
    <property type="evidence" value="ECO:0000318"/>
    <property type="project" value="GO_Central"/>
</dbReference>
<dbReference type="GO" id="GO:0030509">
    <property type="term" value="P:BMP signaling pathway"/>
    <property type="evidence" value="ECO:0000250"/>
    <property type="project" value="WormBase"/>
</dbReference>
<dbReference type="GO" id="GO:0030154">
    <property type="term" value="P:cell differentiation"/>
    <property type="evidence" value="ECO:0000318"/>
    <property type="project" value="GO_Central"/>
</dbReference>
<dbReference type="GO" id="GO:0050832">
    <property type="term" value="P:defense response to fungus"/>
    <property type="evidence" value="ECO:0000315"/>
    <property type="project" value="WormBase"/>
</dbReference>
<dbReference type="GO" id="GO:0045087">
    <property type="term" value="P:innate immune response"/>
    <property type="evidence" value="ECO:0000315"/>
    <property type="project" value="WormBase"/>
</dbReference>
<dbReference type="GO" id="GO:0002119">
    <property type="term" value="P:nematode larval development"/>
    <property type="evidence" value="ECO:0000315"/>
    <property type="project" value="WormBase"/>
</dbReference>
<dbReference type="GO" id="GO:0090597">
    <property type="term" value="P:nematode male tail mating organ morphogenesis"/>
    <property type="evidence" value="ECO:0000315"/>
    <property type="project" value="UniProtKB"/>
</dbReference>
<dbReference type="GO" id="GO:0045138">
    <property type="term" value="P:nematode male tail tip morphogenesis"/>
    <property type="evidence" value="ECO:0000315"/>
    <property type="project" value="WormBase"/>
</dbReference>
<dbReference type="GO" id="GO:0160094">
    <property type="term" value="P:nematode pharynx development"/>
    <property type="evidence" value="ECO:0000315"/>
    <property type="project" value="UniProtKB"/>
</dbReference>
<dbReference type="GO" id="GO:0045793">
    <property type="term" value="P:positive regulation of cell size"/>
    <property type="evidence" value="ECO:0000315"/>
    <property type="project" value="WormBase"/>
</dbReference>
<dbReference type="GO" id="GO:0040018">
    <property type="term" value="P:positive regulation of multicellular organism growth"/>
    <property type="evidence" value="ECO:0000315"/>
    <property type="project" value="WormBase"/>
</dbReference>
<dbReference type="GO" id="GO:0110039">
    <property type="term" value="P:positive regulation of nematode male tail tip morphogenesis"/>
    <property type="evidence" value="ECO:0000315"/>
    <property type="project" value="UniProtKB"/>
</dbReference>
<dbReference type="GO" id="GO:0046622">
    <property type="term" value="P:positive regulation of organ growth"/>
    <property type="evidence" value="ECO:0000315"/>
    <property type="project" value="WormBase"/>
</dbReference>
<dbReference type="GO" id="GO:0045944">
    <property type="term" value="P:positive regulation of transcription by RNA polymerase II"/>
    <property type="evidence" value="ECO:0000315"/>
    <property type="project" value="WormBase"/>
</dbReference>
<dbReference type="GO" id="GO:0030511">
    <property type="term" value="P:positive regulation of transforming growth factor beta receptor signaling pathway"/>
    <property type="evidence" value="ECO:0000316"/>
    <property type="project" value="UniProtKB"/>
</dbReference>
<dbReference type="GO" id="GO:0042661">
    <property type="term" value="P:regulation of mesodermal cell fate specification"/>
    <property type="evidence" value="ECO:0000316"/>
    <property type="project" value="UniProtKB"/>
</dbReference>
<dbReference type="GO" id="GO:0006357">
    <property type="term" value="P:regulation of transcription by RNA polymerase II"/>
    <property type="evidence" value="ECO:0000318"/>
    <property type="project" value="GO_Central"/>
</dbReference>
<dbReference type="GO" id="GO:0060395">
    <property type="term" value="P:SMAD protein signal transduction"/>
    <property type="evidence" value="ECO:0000318"/>
    <property type="project" value="GO_Central"/>
</dbReference>
<dbReference type="CDD" id="cd10495">
    <property type="entry name" value="MH2_R-SMAD"/>
    <property type="match status" value="1"/>
</dbReference>
<dbReference type="FunFam" id="2.60.200.10:FF:000022">
    <property type="entry name" value="Dwarfin sma"/>
    <property type="match status" value="1"/>
</dbReference>
<dbReference type="FunFam" id="3.90.520.10:FF:000005">
    <property type="entry name" value="Mothers against decapentaplegic homolog"/>
    <property type="match status" value="1"/>
</dbReference>
<dbReference type="Gene3D" id="2.60.200.10">
    <property type="match status" value="1"/>
</dbReference>
<dbReference type="Gene3D" id="3.90.520.10">
    <property type="entry name" value="SMAD MH1 domain"/>
    <property type="match status" value="1"/>
</dbReference>
<dbReference type="InterPro" id="IPR013790">
    <property type="entry name" value="Dwarfin"/>
</dbReference>
<dbReference type="InterPro" id="IPR003619">
    <property type="entry name" value="MAD_homology1_Dwarfin-type"/>
</dbReference>
<dbReference type="InterPro" id="IPR013019">
    <property type="entry name" value="MAD_homology_MH1"/>
</dbReference>
<dbReference type="InterPro" id="IPR017855">
    <property type="entry name" value="SMAD-like_dom_sf"/>
</dbReference>
<dbReference type="InterPro" id="IPR001132">
    <property type="entry name" value="SMAD_dom_Dwarfin-type"/>
</dbReference>
<dbReference type="InterPro" id="IPR008984">
    <property type="entry name" value="SMAD_FHA_dom_sf"/>
</dbReference>
<dbReference type="InterPro" id="IPR036578">
    <property type="entry name" value="SMAD_MH1_sf"/>
</dbReference>
<dbReference type="PANTHER" id="PTHR13703:SF65">
    <property type="entry name" value="DWARFIN SMA-3"/>
    <property type="match status" value="1"/>
</dbReference>
<dbReference type="PANTHER" id="PTHR13703">
    <property type="entry name" value="SMAD"/>
    <property type="match status" value="1"/>
</dbReference>
<dbReference type="Pfam" id="PF03165">
    <property type="entry name" value="MH1"/>
    <property type="match status" value="1"/>
</dbReference>
<dbReference type="Pfam" id="PF03166">
    <property type="entry name" value="MH2"/>
    <property type="match status" value="1"/>
</dbReference>
<dbReference type="SMART" id="SM00523">
    <property type="entry name" value="DWA"/>
    <property type="match status" value="1"/>
</dbReference>
<dbReference type="SMART" id="SM00524">
    <property type="entry name" value="DWB"/>
    <property type="match status" value="1"/>
</dbReference>
<dbReference type="SUPFAM" id="SSF56366">
    <property type="entry name" value="SMAD MH1 domain"/>
    <property type="match status" value="1"/>
</dbReference>
<dbReference type="SUPFAM" id="SSF49879">
    <property type="entry name" value="SMAD/FHA domain"/>
    <property type="match status" value="1"/>
</dbReference>
<dbReference type="PROSITE" id="PS51075">
    <property type="entry name" value="MH1"/>
    <property type="match status" value="1"/>
</dbReference>
<dbReference type="PROSITE" id="PS51076">
    <property type="entry name" value="MH2"/>
    <property type="match status" value="1"/>
</dbReference>
<comment type="function">
    <text evidence="5">Involved in TGF-beta pathway. Plays a role in male tail tip morphogenesis (PubMed:21408209).</text>
</comment>
<comment type="subcellular location">
    <subcellularLocation>
        <location evidence="5">Cytoplasm</location>
    </subcellularLocation>
    <subcellularLocation>
        <location evidence="5">Nucleus</location>
    </subcellularLocation>
    <text evidence="5">In males localizes to the nuclei and cytoplasm during tail tip morphogenesis (PubMed:21408209). In hermaphrodites localizes only to the cytoplasm during tail tip morphogenesis throughout the L4 stage (PubMed:21408209).</text>
</comment>
<comment type="developmental stage">
    <text evidence="5">Expressed at low levels in the tail tip in both males and hermaphrodites from the L4 larval stage.</text>
</comment>
<comment type="disruption phenotype">
    <text evidence="5">RNAi-mediated knockdown disrupts tail tip morphogenesis resulting in retention of the pointed larval tail tip in adult males (also known as the Lep phenotype).</text>
</comment>
<comment type="similarity">
    <text evidence="7">Belongs to the dwarfin/SMAD family.</text>
</comment>
<organism>
    <name type="scientific">Caenorhabditis elegans</name>
    <dbReference type="NCBI Taxonomy" id="6239"/>
    <lineage>
        <taxon>Eukaryota</taxon>
        <taxon>Metazoa</taxon>
        <taxon>Ecdysozoa</taxon>
        <taxon>Nematoda</taxon>
        <taxon>Chromadorea</taxon>
        <taxon>Rhabditida</taxon>
        <taxon>Rhabditina</taxon>
        <taxon>Rhabditomorpha</taxon>
        <taxon>Rhabditoidea</taxon>
        <taxon>Rhabditidae</taxon>
        <taxon>Peloderinae</taxon>
        <taxon>Caenorhabditis</taxon>
    </lineage>
</organism>
<reference key="1">
    <citation type="journal article" date="1996" name="Proc. Natl. Acad. Sci. U.S.A.">
        <title>Caenorhabditis elegans genes sma-2, sma-3, and sma-4 define a conserved family of transforming growth factor beta pathway components.</title>
        <authorList>
            <person name="Savage C."/>
            <person name="Das P."/>
            <person name="Finelli A.L."/>
            <person name="Townsend S.R."/>
            <person name="Sun C.-Y."/>
            <person name="Baird S.E."/>
            <person name="Padgett R.W."/>
        </authorList>
    </citation>
    <scope>NUCLEOTIDE SEQUENCE [MRNA]</scope>
    <source>
        <strain>Bristol N2</strain>
    </source>
</reference>
<reference key="2">
    <citation type="journal article" date="1998" name="Science">
        <title>Genome sequence of the nematode C. elegans: a platform for investigating biology.</title>
        <authorList>
            <consortium name="The C. elegans sequencing consortium"/>
        </authorList>
    </citation>
    <scope>NUCLEOTIDE SEQUENCE [LARGE SCALE GENOMIC DNA]</scope>
    <source>
        <strain>Bristol N2</strain>
    </source>
</reference>
<reference key="3">
    <citation type="journal article" date="1995" name="Genetics">
        <title>Genetic characterization and cloning of mothers against dpp, a gene required for decapentaplegic function in Drosophila melanogaster.</title>
        <authorList>
            <person name="Sekelsky J.J."/>
            <person name="Newfeld S.J."/>
            <person name="Raftery L.A."/>
            <person name="Chartoff E.H."/>
            <person name="Gelbart W.M."/>
        </authorList>
    </citation>
    <scope>GENE NAME CEM-2</scope>
</reference>
<reference key="4">
    <citation type="journal article" date="2011" name="PLoS Genet.">
        <title>A bow-tie genetic architecture for morphogenesis suggested by a genome-wide RNAi screen in Caenorhabditis elegans.</title>
        <authorList>
            <person name="Nelson M.D."/>
            <person name="Zhou E."/>
            <person name="Kiontke K."/>
            <person name="Fradin H."/>
            <person name="Maldonado G."/>
            <person name="Martin D."/>
            <person name="Shah K."/>
            <person name="Fitch D.H."/>
        </authorList>
    </citation>
    <scope>FUNCTION</scope>
    <scope>SUBCELLULAR LOCATION</scope>
    <scope>DEVELOPMENTAL STAGE</scope>
    <scope>DISRUPTION PHENOTYPE</scope>
    <scope>MUTAGENESIS OF GLY-348</scope>
</reference>
<keyword id="KW-0963">Cytoplasm</keyword>
<keyword id="KW-0238">DNA-binding</keyword>
<keyword id="KW-0479">Metal-binding</keyword>
<keyword id="KW-0539">Nucleus</keyword>
<keyword id="KW-1185">Reference proteome</keyword>
<keyword id="KW-0804">Transcription</keyword>
<keyword id="KW-0805">Transcription regulation</keyword>
<keyword id="KW-0862">Zinc</keyword>
<gene>
    <name evidence="8" type="primary">sma-3</name>
    <name evidence="6" type="synonym">cem-2</name>
    <name evidence="8" type="ORF">R13F6.9</name>
</gene>